<feature type="chain" id="PRO_0000202295" description="Uncharacterized protein TP_0656">
    <location>
        <begin position="1"/>
        <end position="33"/>
    </location>
</feature>
<feature type="region of interest" description="Disordered" evidence="1">
    <location>
        <begin position="1"/>
        <end position="24"/>
    </location>
</feature>
<organism>
    <name type="scientific">Treponema pallidum (strain Nichols)</name>
    <dbReference type="NCBI Taxonomy" id="243276"/>
    <lineage>
        <taxon>Bacteria</taxon>
        <taxon>Pseudomonadati</taxon>
        <taxon>Spirochaetota</taxon>
        <taxon>Spirochaetia</taxon>
        <taxon>Spirochaetales</taxon>
        <taxon>Treponemataceae</taxon>
        <taxon>Treponema</taxon>
    </lineage>
</organism>
<accession>O83662</accession>
<dbReference type="EMBL" id="AE000520">
    <property type="protein sequence ID" value="AAC65639.1"/>
    <property type="molecule type" value="Genomic_DNA"/>
</dbReference>
<dbReference type="PIR" id="A71297">
    <property type="entry name" value="A71297"/>
</dbReference>
<dbReference type="IntAct" id="O83662">
    <property type="interactions" value="35"/>
</dbReference>
<dbReference type="EnsemblBacteria" id="AAC65639">
    <property type="protein sequence ID" value="AAC65639"/>
    <property type="gene ID" value="TP_0656"/>
</dbReference>
<dbReference type="KEGG" id="tpa:TP_0656"/>
<dbReference type="HOGENOM" id="CLU_3384332_0_0_12"/>
<dbReference type="Proteomes" id="UP000000811">
    <property type="component" value="Chromosome"/>
</dbReference>
<evidence type="ECO:0000256" key="1">
    <source>
        <dbReference type="SAM" id="MobiDB-lite"/>
    </source>
</evidence>
<keyword id="KW-1185">Reference proteome</keyword>
<protein>
    <recommendedName>
        <fullName>Uncharacterized protein TP_0656</fullName>
    </recommendedName>
</protein>
<proteinExistence type="predicted"/>
<name>Y656_TREPA</name>
<sequence length="33" mass="3646">MRTGTRCDLGELSHPRKTLPPRGMGILCNYTGN</sequence>
<gene>
    <name type="ordered locus">TP_0656</name>
</gene>
<reference key="1">
    <citation type="journal article" date="1998" name="Science">
        <title>Complete genome sequence of Treponema pallidum, the syphilis spirochete.</title>
        <authorList>
            <person name="Fraser C.M."/>
            <person name="Norris S.J."/>
            <person name="Weinstock G.M."/>
            <person name="White O."/>
            <person name="Sutton G.G."/>
            <person name="Dodson R.J."/>
            <person name="Gwinn M.L."/>
            <person name="Hickey E.K."/>
            <person name="Clayton R.A."/>
            <person name="Ketchum K.A."/>
            <person name="Sodergren E."/>
            <person name="Hardham J.M."/>
            <person name="McLeod M.P."/>
            <person name="Salzberg S.L."/>
            <person name="Peterson J.D."/>
            <person name="Khalak H.G."/>
            <person name="Richardson D.L."/>
            <person name="Howell J.K."/>
            <person name="Chidambaram M."/>
            <person name="Utterback T.R."/>
            <person name="McDonald L.A."/>
            <person name="Artiach P."/>
            <person name="Bowman C."/>
            <person name="Cotton M.D."/>
            <person name="Fujii C."/>
            <person name="Garland S.A."/>
            <person name="Hatch B."/>
            <person name="Horst K."/>
            <person name="Roberts K.M."/>
            <person name="Sandusky M."/>
            <person name="Weidman J.F."/>
            <person name="Smith H.O."/>
            <person name="Venter J.C."/>
        </authorList>
    </citation>
    <scope>NUCLEOTIDE SEQUENCE [LARGE SCALE GENOMIC DNA]</scope>
    <source>
        <strain>Nichols</strain>
    </source>
</reference>